<evidence type="ECO:0000256" key="1">
    <source>
        <dbReference type="SAM" id="MobiDB-lite"/>
    </source>
</evidence>
<evidence type="ECO:0000269" key="2">
    <source>
    </source>
</evidence>
<evidence type="ECO:0000269" key="3">
    <source>
    </source>
</evidence>
<evidence type="ECO:0000269" key="4">
    <source>
    </source>
</evidence>
<evidence type="ECO:0000305" key="5"/>
<evidence type="ECO:0007744" key="6">
    <source>
    </source>
</evidence>
<organism>
    <name type="scientific">Saccharomyces cerevisiae (strain ATCC 204508 / S288c)</name>
    <name type="common">Baker's yeast</name>
    <dbReference type="NCBI Taxonomy" id="559292"/>
    <lineage>
        <taxon>Eukaryota</taxon>
        <taxon>Fungi</taxon>
        <taxon>Dikarya</taxon>
        <taxon>Ascomycota</taxon>
        <taxon>Saccharomycotina</taxon>
        <taxon>Saccharomycetes</taxon>
        <taxon>Saccharomycetales</taxon>
        <taxon>Saccharomycetaceae</taxon>
        <taxon>Saccharomyces</taxon>
    </lineage>
</organism>
<feature type="chain" id="PRO_0000247153" description="Protein CMS1">
    <location>
        <begin position="1"/>
        <end position="291"/>
    </location>
</feature>
<feature type="region of interest" description="Disordered" evidence="1">
    <location>
        <begin position="22"/>
        <end position="79"/>
    </location>
</feature>
<feature type="compositionally biased region" description="Basic and acidic residues" evidence="1">
    <location>
        <begin position="50"/>
        <end position="64"/>
    </location>
</feature>
<feature type="compositionally biased region" description="Basic residues" evidence="1">
    <location>
        <begin position="67"/>
        <end position="78"/>
    </location>
</feature>
<feature type="modified residue" description="Phosphoserine" evidence="6">
    <location>
        <position position="59"/>
    </location>
</feature>
<gene>
    <name type="primary">CMS1</name>
    <name type="ordered locus">YLR003C</name>
</gene>
<reference key="1">
    <citation type="journal article" date="1997" name="Nature">
        <title>The nucleotide sequence of Saccharomyces cerevisiae chromosome XII.</title>
        <authorList>
            <person name="Johnston M."/>
            <person name="Hillier L.W."/>
            <person name="Riles L."/>
            <person name="Albermann K."/>
            <person name="Andre B."/>
            <person name="Ansorge W."/>
            <person name="Benes V."/>
            <person name="Brueckner M."/>
            <person name="Delius H."/>
            <person name="Dubois E."/>
            <person name="Duesterhoeft A."/>
            <person name="Entian K.-D."/>
            <person name="Floeth M."/>
            <person name="Goffeau A."/>
            <person name="Hebling U."/>
            <person name="Heumann K."/>
            <person name="Heuss-Neitzel D."/>
            <person name="Hilbert H."/>
            <person name="Hilger F."/>
            <person name="Kleine K."/>
            <person name="Koetter P."/>
            <person name="Louis E.J."/>
            <person name="Messenguy F."/>
            <person name="Mewes H.-W."/>
            <person name="Miosga T."/>
            <person name="Moestl D."/>
            <person name="Mueller-Auer S."/>
            <person name="Nentwich U."/>
            <person name="Obermaier B."/>
            <person name="Piravandi E."/>
            <person name="Pohl T.M."/>
            <person name="Portetelle D."/>
            <person name="Purnelle B."/>
            <person name="Rechmann S."/>
            <person name="Rieger M."/>
            <person name="Rinke M."/>
            <person name="Rose M."/>
            <person name="Scharfe M."/>
            <person name="Scherens B."/>
            <person name="Scholler P."/>
            <person name="Schwager C."/>
            <person name="Schwarz S."/>
            <person name="Underwood A.P."/>
            <person name="Urrestarazu L.A."/>
            <person name="Vandenbol M."/>
            <person name="Verhasselt P."/>
            <person name="Vierendeels F."/>
            <person name="Voet M."/>
            <person name="Volckaert G."/>
            <person name="Voss H."/>
            <person name="Wambutt R."/>
            <person name="Wedler E."/>
            <person name="Wedler H."/>
            <person name="Zimmermann F.K."/>
            <person name="Zollner A."/>
            <person name="Hani J."/>
            <person name="Hoheisel J.D."/>
        </authorList>
    </citation>
    <scope>NUCLEOTIDE SEQUENCE [LARGE SCALE GENOMIC DNA]</scope>
    <source>
        <strain>ATCC 204508 / S288c</strain>
    </source>
</reference>
<reference key="2">
    <citation type="journal article" date="2014" name="G3 (Bethesda)">
        <title>The reference genome sequence of Saccharomyces cerevisiae: Then and now.</title>
        <authorList>
            <person name="Engel S.R."/>
            <person name="Dietrich F.S."/>
            <person name="Fisk D.G."/>
            <person name="Binkley G."/>
            <person name="Balakrishnan R."/>
            <person name="Costanzo M.C."/>
            <person name="Dwight S.S."/>
            <person name="Hitz B.C."/>
            <person name="Karra K."/>
            <person name="Nash R.S."/>
            <person name="Weng S."/>
            <person name="Wong E.D."/>
            <person name="Lloyd P."/>
            <person name="Skrzypek M.S."/>
            <person name="Miyasato S.R."/>
            <person name="Simison M."/>
            <person name="Cherry J.M."/>
        </authorList>
    </citation>
    <scope>GENOME REANNOTATION</scope>
    <source>
        <strain>ATCC 204508 / S288c</strain>
    </source>
</reference>
<reference key="3">
    <citation type="journal article" date="2001" name="Cell Res.">
        <title>Overexpression of a novel gene, Cms1, can rescue the growth arrest of a Saccharomyces cerevisiae mcm10 suppressor.</title>
        <authorList>
            <person name="Wang J.W."/>
            <person name="Wu J.R."/>
        </authorList>
    </citation>
    <scope>FUNCTION</scope>
</reference>
<reference key="4">
    <citation type="journal article" date="2003" name="Nature">
        <title>Global analysis of protein localization in budding yeast.</title>
        <authorList>
            <person name="Huh W.-K."/>
            <person name="Falvo J.V."/>
            <person name="Gerke L.C."/>
            <person name="Carroll A.S."/>
            <person name="Howson R.W."/>
            <person name="Weissman J.S."/>
            <person name="O'Shea E.K."/>
        </authorList>
    </citation>
    <scope>SUBCELLULAR LOCATION [LARGE SCALE ANALYSIS]</scope>
</reference>
<reference key="5">
    <citation type="journal article" date="2003" name="Nature">
        <title>Global analysis of protein expression in yeast.</title>
        <authorList>
            <person name="Ghaemmaghami S."/>
            <person name="Huh W.-K."/>
            <person name="Bower K."/>
            <person name="Howson R.W."/>
            <person name="Belle A."/>
            <person name="Dephoure N."/>
            <person name="O'Shea E.K."/>
            <person name="Weissman J.S."/>
        </authorList>
    </citation>
    <scope>LEVEL OF PROTEIN EXPRESSION [LARGE SCALE ANALYSIS]</scope>
</reference>
<reference key="6">
    <citation type="journal article" date="2007" name="Proc. Natl. Acad. Sci. U.S.A.">
        <title>Analysis of phosphorylation sites on proteins from Saccharomyces cerevisiae by electron transfer dissociation (ETD) mass spectrometry.</title>
        <authorList>
            <person name="Chi A."/>
            <person name="Huttenhower C."/>
            <person name="Geer L.Y."/>
            <person name="Coon J.J."/>
            <person name="Syka J.E.P."/>
            <person name="Bai D.L."/>
            <person name="Shabanowitz J."/>
            <person name="Burke D.J."/>
            <person name="Troyanskaya O.G."/>
            <person name="Hunt D.F."/>
        </authorList>
    </citation>
    <scope>PHOSPHORYLATION [LARGE SCALE ANALYSIS] AT SER-59</scope>
    <scope>IDENTIFICATION BY MASS SPECTROMETRY [LARGE SCALE ANALYSIS]</scope>
</reference>
<name>CMS1_YEAST</name>
<proteinExistence type="evidence at protein level"/>
<keyword id="KW-0539">Nucleus</keyword>
<keyword id="KW-0597">Phosphoprotein</keyword>
<keyword id="KW-1185">Reference proteome</keyword>
<dbReference type="EMBL" id="Z73175">
    <property type="protein sequence ID" value="CAA97525.1"/>
    <property type="molecule type" value="Genomic_DNA"/>
</dbReference>
<dbReference type="EMBL" id="BK006945">
    <property type="protein sequence ID" value="DAA09321.1"/>
    <property type="molecule type" value="Genomic_DNA"/>
</dbReference>
<dbReference type="PIR" id="S64825">
    <property type="entry name" value="S64825"/>
</dbReference>
<dbReference type="RefSeq" id="NP_013103.1">
    <property type="nucleotide sequence ID" value="NM_001181890.1"/>
</dbReference>
<dbReference type="SMR" id="Q07897"/>
<dbReference type="BioGRID" id="31276">
    <property type="interactions" value="119"/>
</dbReference>
<dbReference type="DIP" id="DIP-2550N"/>
<dbReference type="FunCoup" id="Q07897">
    <property type="interactions" value="349"/>
</dbReference>
<dbReference type="IntAct" id="Q07897">
    <property type="interactions" value="43"/>
</dbReference>
<dbReference type="MINT" id="Q07897"/>
<dbReference type="STRING" id="4932.YLR003C"/>
<dbReference type="iPTMnet" id="Q07897"/>
<dbReference type="PaxDb" id="4932-YLR003C"/>
<dbReference type="PeptideAtlas" id="Q07897"/>
<dbReference type="EnsemblFungi" id="YLR003C_mRNA">
    <property type="protein sequence ID" value="YLR003C"/>
    <property type="gene ID" value="YLR003C"/>
</dbReference>
<dbReference type="GeneID" id="850689"/>
<dbReference type="KEGG" id="sce:YLR003C"/>
<dbReference type="AGR" id="SGD:S000003993"/>
<dbReference type="SGD" id="S000003993">
    <property type="gene designation" value="CMS1"/>
</dbReference>
<dbReference type="VEuPathDB" id="FungiDB:YLR003C"/>
<dbReference type="eggNOG" id="KOG3089">
    <property type="taxonomic scope" value="Eukaryota"/>
</dbReference>
<dbReference type="GeneTree" id="ENSGT00390000006574"/>
<dbReference type="HOGENOM" id="CLU_082468_0_0_1"/>
<dbReference type="InParanoid" id="Q07897"/>
<dbReference type="OMA" id="CVGTPAR"/>
<dbReference type="OrthoDB" id="1929311at2759"/>
<dbReference type="BioCyc" id="YEAST:G3O-32164-MONOMER"/>
<dbReference type="BioGRID-ORCS" id="850689">
    <property type="hits" value="1 hit in 10 CRISPR screens"/>
</dbReference>
<dbReference type="PRO" id="PR:Q07897"/>
<dbReference type="Proteomes" id="UP000002311">
    <property type="component" value="Chromosome XII"/>
</dbReference>
<dbReference type="RNAct" id="Q07897">
    <property type="molecule type" value="protein"/>
</dbReference>
<dbReference type="GO" id="GO:0030686">
    <property type="term" value="C:90S preribosome"/>
    <property type="evidence" value="ECO:0007005"/>
    <property type="project" value="SGD"/>
</dbReference>
<dbReference type="GO" id="GO:0005737">
    <property type="term" value="C:cytoplasm"/>
    <property type="evidence" value="ECO:0007005"/>
    <property type="project" value="SGD"/>
</dbReference>
<dbReference type="GO" id="GO:0005634">
    <property type="term" value="C:nucleus"/>
    <property type="evidence" value="ECO:0007005"/>
    <property type="project" value="SGD"/>
</dbReference>
<dbReference type="InterPro" id="IPR032704">
    <property type="entry name" value="Cms1"/>
</dbReference>
<dbReference type="PANTHER" id="PTHR24030">
    <property type="entry name" value="PROTEIN CMSS1"/>
    <property type="match status" value="1"/>
</dbReference>
<dbReference type="PANTHER" id="PTHR24030:SF0">
    <property type="entry name" value="PROTEIN CMSS1"/>
    <property type="match status" value="1"/>
</dbReference>
<dbReference type="Pfam" id="PF14617">
    <property type="entry name" value="CMS1"/>
    <property type="match status" value="1"/>
</dbReference>
<sequence length="291" mass="33394">MSNPDDLDDGLAYDFDAEHEVIFDAKDGSPPTKKVQKRSIEQDDDDVDDIDGKKEERNSEDDSNRPISKRQKKLQKKSKLIEKKKEESQYIVSQRKALPASSPEKIIEYLTTLIREKNPDLSVLELEELYFKRNDFLSTEKFDAERRLSNFPAFIQKFSVAPKKIVFSMSNIRVADVYRSLNGGKNCVKLFSKSKLKDDIATVERLLTDSSKKSNKNKDSLYFIATPTRMQKIIEATDLLFQGKEKLDIILDASYLDPKDNTILSFENAAVLCQVLKTFLNKKSSVKILLY</sequence>
<accession>Q07897</accession>
<accession>D6VY05</accession>
<comment type="function">
    <text evidence="2">May play a role in the regulation of DNA replication and cell cycle control.</text>
</comment>
<comment type="subcellular location">
    <subcellularLocation>
        <location evidence="3">Nucleus</location>
    </subcellularLocation>
</comment>
<comment type="miscellaneous">
    <text evidence="4">Present with 1200 molecules/cell in log phase SD medium.</text>
</comment>
<comment type="similarity">
    <text evidence="5">Belongs to the CMS1 family.</text>
</comment>
<protein>
    <recommendedName>
        <fullName>Protein CMS1</fullName>
    </recommendedName>
    <alternativeName>
        <fullName>Complementation of MCM10 suppressor protein 1</fullName>
    </alternativeName>
</protein>